<comment type="similarity">
    <text evidence="1">Belongs to the universal ribosomal protein uS9 family.</text>
</comment>
<reference key="1">
    <citation type="journal article" date="2006" name="Proc. Natl. Acad. Sci. U.S.A.">
        <title>Molecular genetic anatomy of inter- and intraserotype variation in the human bacterial pathogen group A Streptococcus.</title>
        <authorList>
            <person name="Beres S.B."/>
            <person name="Richter E.W."/>
            <person name="Nagiec M.J."/>
            <person name="Sumby P."/>
            <person name="Porcella S.F."/>
            <person name="DeLeo F.R."/>
            <person name="Musser J.M."/>
        </authorList>
    </citation>
    <scope>NUCLEOTIDE SEQUENCE [LARGE SCALE GENOMIC DNA]</scope>
    <source>
        <strain>MGAS10270</strain>
    </source>
</reference>
<keyword id="KW-0687">Ribonucleoprotein</keyword>
<keyword id="KW-0689">Ribosomal protein</keyword>
<organism>
    <name type="scientific">Streptococcus pyogenes serotype M2 (strain MGAS10270)</name>
    <dbReference type="NCBI Taxonomy" id="370552"/>
    <lineage>
        <taxon>Bacteria</taxon>
        <taxon>Bacillati</taxon>
        <taxon>Bacillota</taxon>
        <taxon>Bacilli</taxon>
        <taxon>Lactobacillales</taxon>
        <taxon>Streptococcaceae</taxon>
        <taxon>Streptococcus</taxon>
    </lineage>
</organism>
<feature type="chain" id="PRO_1000051342" description="Small ribosomal subunit protein uS9">
    <location>
        <begin position="1"/>
        <end position="130"/>
    </location>
</feature>
<dbReference type="EMBL" id="CP000260">
    <property type="protein sequence ID" value="ABF34779.1"/>
    <property type="molecule type" value="Genomic_DNA"/>
</dbReference>
<dbReference type="RefSeq" id="WP_002982716.1">
    <property type="nucleotide sequence ID" value="NZ_CVUH01000011.1"/>
</dbReference>
<dbReference type="SMR" id="Q1JEY0"/>
<dbReference type="GeneID" id="83689365"/>
<dbReference type="KEGG" id="sph:MGAS10270_Spy1714"/>
<dbReference type="HOGENOM" id="CLU_046483_2_1_9"/>
<dbReference type="Proteomes" id="UP000002436">
    <property type="component" value="Chromosome"/>
</dbReference>
<dbReference type="GO" id="GO:0022627">
    <property type="term" value="C:cytosolic small ribosomal subunit"/>
    <property type="evidence" value="ECO:0007669"/>
    <property type="project" value="TreeGrafter"/>
</dbReference>
<dbReference type="GO" id="GO:0003723">
    <property type="term" value="F:RNA binding"/>
    <property type="evidence" value="ECO:0007669"/>
    <property type="project" value="TreeGrafter"/>
</dbReference>
<dbReference type="GO" id="GO:0003735">
    <property type="term" value="F:structural constituent of ribosome"/>
    <property type="evidence" value="ECO:0007669"/>
    <property type="project" value="InterPro"/>
</dbReference>
<dbReference type="GO" id="GO:0006412">
    <property type="term" value="P:translation"/>
    <property type="evidence" value="ECO:0007669"/>
    <property type="project" value="UniProtKB-UniRule"/>
</dbReference>
<dbReference type="FunFam" id="3.30.230.10:FF:000001">
    <property type="entry name" value="30S ribosomal protein S9"/>
    <property type="match status" value="1"/>
</dbReference>
<dbReference type="Gene3D" id="3.30.230.10">
    <property type="match status" value="1"/>
</dbReference>
<dbReference type="HAMAP" id="MF_00532_B">
    <property type="entry name" value="Ribosomal_uS9_B"/>
    <property type="match status" value="1"/>
</dbReference>
<dbReference type="InterPro" id="IPR020568">
    <property type="entry name" value="Ribosomal_Su5_D2-typ_SF"/>
</dbReference>
<dbReference type="InterPro" id="IPR000754">
    <property type="entry name" value="Ribosomal_uS9"/>
</dbReference>
<dbReference type="InterPro" id="IPR023035">
    <property type="entry name" value="Ribosomal_uS9_bac/plastid"/>
</dbReference>
<dbReference type="InterPro" id="IPR020574">
    <property type="entry name" value="Ribosomal_uS9_CS"/>
</dbReference>
<dbReference type="InterPro" id="IPR014721">
    <property type="entry name" value="Ribsml_uS5_D2-typ_fold_subgr"/>
</dbReference>
<dbReference type="NCBIfam" id="NF001099">
    <property type="entry name" value="PRK00132.1"/>
    <property type="match status" value="1"/>
</dbReference>
<dbReference type="PANTHER" id="PTHR21569">
    <property type="entry name" value="RIBOSOMAL PROTEIN S9"/>
    <property type="match status" value="1"/>
</dbReference>
<dbReference type="PANTHER" id="PTHR21569:SF1">
    <property type="entry name" value="SMALL RIBOSOMAL SUBUNIT PROTEIN US9M"/>
    <property type="match status" value="1"/>
</dbReference>
<dbReference type="Pfam" id="PF00380">
    <property type="entry name" value="Ribosomal_S9"/>
    <property type="match status" value="1"/>
</dbReference>
<dbReference type="SUPFAM" id="SSF54211">
    <property type="entry name" value="Ribosomal protein S5 domain 2-like"/>
    <property type="match status" value="1"/>
</dbReference>
<dbReference type="PROSITE" id="PS00360">
    <property type="entry name" value="RIBOSOMAL_S9"/>
    <property type="match status" value="1"/>
</dbReference>
<accession>Q1JEY0</accession>
<proteinExistence type="inferred from homology"/>
<gene>
    <name evidence="1" type="primary">rpsI</name>
    <name type="ordered locus">MGAS10270_Spy1714</name>
</gene>
<sequence>MAQAQYAGTGRRKNAVARVRLVPGTGKITVNKKDVEEYIPHADLRLIINQPFAVTSTEGSYDVFVNVVGGGYGGQSGAIRHGIARALLQVDPDFRDSLKRAGLLTRDARMVERKKPGLKKARKASQFSKR</sequence>
<protein>
    <recommendedName>
        <fullName evidence="1">Small ribosomal subunit protein uS9</fullName>
    </recommendedName>
    <alternativeName>
        <fullName evidence="2">30S ribosomal protein S9</fullName>
    </alternativeName>
</protein>
<evidence type="ECO:0000255" key="1">
    <source>
        <dbReference type="HAMAP-Rule" id="MF_00532"/>
    </source>
</evidence>
<evidence type="ECO:0000305" key="2"/>
<name>RS9_STRPD</name>